<reference key="1">
    <citation type="journal article" date="1996" name="DNA Res.">
        <title>A 570-kb DNA sequence of the Escherichia coli K-12 genome corresponding to the 28.0-40.1 min region on the linkage map.</title>
        <authorList>
            <person name="Aiba H."/>
            <person name="Baba T."/>
            <person name="Fujita K."/>
            <person name="Hayashi K."/>
            <person name="Inada T."/>
            <person name="Isono K."/>
            <person name="Itoh T."/>
            <person name="Kasai H."/>
            <person name="Kashimoto K."/>
            <person name="Kimura S."/>
            <person name="Kitakawa M."/>
            <person name="Kitagawa M."/>
            <person name="Makino K."/>
            <person name="Miki T."/>
            <person name="Mizobuchi K."/>
            <person name="Mori H."/>
            <person name="Mori T."/>
            <person name="Motomura K."/>
            <person name="Nakade S."/>
            <person name="Nakamura Y."/>
            <person name="Nashimoto H."/>
            <person name="Nishio Y."/>
            <person name="Oshima T."/>
            <person name="Saito N."/>
            <person name="Sampei G."/>
            <person name="Seki Y."/>
            <person name="Sivasundaram S."/>
            <person name="Tagami H."/>
            <person name="Takeda J."/>
            <person name="Takemoto K."/>
            <person name="Takeuchi Y."/>
            <person name="Wada C."/>
            <person name="Yamamoto Y."/>
            <person name="Horiuchi T."/>
        </authorList>
    </citation>
    <scope>NUCLEOTIDE SEQUENCE [LARGE SCALE GENOMIC DNA]</scope>
    <source>
        <strain>K12 / W3110 / ATCC 27325 / DSM 5911</strain>
    </source>
</reference>
<reference key="2">
    <citation type="journal article" date="1997" name="Science">
        <title>The complete genome sequence of Escherichia coli K-12.</title>
        <authorList>
            <person name="Blattner F.R."/>
            <person name="Plunkett G. III"/>
            <person name="Bloch C.A."/>
            <person name="Perna N.T."/>
            <person name="Burland V."/>
            <person name="Riley M."/>
            <person name="Collado-Vides J."/>
            <person name="Glasner J.D."/>
            <person name="Rode C.K."/>
            <person name="Mayhew G.F."/>
            <person name="Gregor J."/>
            <person name="Davis N.W."/>
            <person name="Kirkpatrick H.A."/>
            <person name="Goeden M.A."/>
            <person name="Rose D.J."/>
            <person name="Mau B."/>
            <person name="Shao Y."/>
        </authorList>
    </citation>
    <scope>NUCLEOTIDE SEQUENCE [LARGE SCALE GENOMIC DNA]</scope>
    <source>
        <strain>K12 / MG1655 / ATCC 47076</strain>
    </source>
</reference>
<reference key="3">
    <citation type="journal article" date="2006" name="Mol. Syst. Biol.">
        <title>Highly accurate genome sequences of Escherichia coli K-12 strains MG1655 and W3110.</title>
        <authorList>
            <person name="Hayashi K."/>
            <person name="Morooka N."/>
            <person name="Yamamoto Y."/>
            <person name="Fujita K."/>
            <person name="Isono K."/>
            <person name="Choi S."/>
            <person name="Ohtsubo E."/>
            <person name="Baba T."/>
            <person name="Wanner B.L."/>
            <person name="Mori H."/>
            <person name="Horiuchi T."/>
        </authorList>
    </citation>
    <scope>NUCLEOTIDE SEQUENCE [LARGE SCALE GENOMIC DNA]</scope>
    <source>
        <strain>K12 / W3110 / ATCC 27325 / DSM 5911</strain>
    </source>
</reference>
<reference key="4">
    <citation type="journal article" date="2003" name="EMBO J.">
        <title>A reducing system of the superoxide sensor SoxR in Escherichia coli.</title>
        <authorList>
            <person name="Koo M.S."/>
            <person name="Lee J.H."/>
            <person name="Rah S.Y."/>
            <person name="Yeo W.S."/>
            <person name="Lee J.W."/>
            <person name="Lee K.L."/>
            <person name="Koh Y.S."/>
            <person name="Kang S.O."/>
            <person name="Roe J.H."/>
        </authorList>
    </citation>
    <scope>FUNCTION</scope>
    <scope>SUBUNIT</scope>
    <scope>GENE NAME</scope>
</reference>
<sequence>MLKTIRKHGITLALFAAGSTGLTAAINQMTKTTIAEQASLQQKALFDQVLPAERYNNALAQSCYLVTAPELGKGEHRVYIAKQDDKPVAAVLEATAPDGYSGAIQLLVGADFNGTVLGTRVTEHHETPGLGDKIELRLSDWITHFAGKKISGADDAHWAVKKDGGDFDQFTGATITPRAVVNAVKRAGLYAQTLPAQLSQLPACGE</sequence>
<organism>
    <name type="scientific">Escherichia coli (strain K12)</name>
    <dbReference type="NCBI Taxonomy" id="83333"/>
    <lineage>
        <taxon>Bacteria</taxon>
        <taxon>Pseudomonadati</taxon>
        <taxon>Pseudomonadota</taxon>
        <taxon>Gammaproteobacteria</taxon>
        <taxon>Enterobacterales</taxon>
        <taxon>Enterobacteriaceae</taxon>
        <taxon>Escherichia</taxon>
    </lineage>
</organism>
<accession>P77285</accession>
<gene>
    <name evidence="1 3" type="primary">rsxG</name>
    <name type="synonym">rnfG</name>
    <name type="synonym">ydgP</name>
    <name type="ordered locus">b1631</name>
    <name type="ordered locus">JW1623</name>
</gene>
<proteinExistence type="evidence at protein level"/>
<evidence type="ECO:0000255" key="1">
    <source>
        <dbReference type="HAMAP-Rule" id="MF_00479"/>
    </source>
</evidence>
<evidence type="ECO:0000269" key="2">
    <source>
    </source>
</evidence>
<evidence type="ECO:0000303" key="3">
    <source>
    </source>
</evidence>
<evidence type="ECO:0000305" key="4"/>
<evidence type="ECO:0000305" key="5">
    <source>
    </source>
</evidence>
<protein>
    <recommendedName>
        <fullName evidence="1 4">Ion-translocating oxidoreductase complex subunit G</fullName>
        <ecNumber evidence="1 4">7.-.-.-</ecNumber>
    </recommendedName>
    <alternativeName>
        <fullName evidence="1 4">Rsx electron transport complex subunit G</fullName>
    </alternativeName>
</protein>
<dbReference type="EC" id="7.-.-.-" evidence="1 4"/>
<dbReference type="EMBL" id="U00096">
    <property type="protein sequence ID" value="AAC74703.1"/>
    <property type="molecule type" value="Genomic_DNA"/>
</dbReference>
<dbReference type="EMBL" id="AP009048">
    <property type="protein sequence ID" value="BAA15385.1"/>
    <property type="molecule type" value="Genomic_DNA"/>
</dbReference>
<dbReference type="PIR" id="A64920">
    <property type="entry name" value="A64920"/>
</dbReference>
<dbReference type="RefSeq" id="NP_416148.1">
    <property type="nucleotide sequence ID" value="NC_000913.3"/>
</dbReference>
<dbReference type="RefSeq" id="WP_000920784.1">
    <property type="nucleotide sequence ID" value="NZ_STEB01000003.1"/>
</dbReference>
<dbReference type="SMR" id="P77285"/>
<dbReference type="BioGRID" id="4261975">
    <property type="interactions" value="111"/>
</dbReference>
<dbReference type="BioGRID" id="850518">
    <property type="interactions" value="2"/>
</dbReference>
<dbReference type="DIP" id="DIP-11722N"/>
<dbReference type="FunCoup" id="P77285">
    <property type="interactions" value="94"/>
</dbReference>
<dbReference type="IntAct" id="P77285">
    <property type="interactions" value="1"/>
</dbReference>
<dbReference type="STRING" id="511145.b1631"/>
<dbReference type="TCDB" id="3.D.6.1.4">
    <property type="family name" value="the ion (h(+) or na(+))-translocating nadh:ferredoxin oxidoreductase (nfo or rnf) family"/>
</dbReference>
<dbReference type="jPOST" id="P77285"/>
<dbReference type="PaxDb" id="511145-b1631"/>
<dbReference type="EnsemblBacteria" id="AAC74703">
    <property type="protein sequence ID" value="AAC74703"/>
    <property type="gene ID" value="b1631"/>
</dbReference>
<dbReference type="GeneID" id="86859605"/>
<dbReference type="GeneID" id="946158"/>
<dbReference type="KEGG" id="ecj:JW1623"/>
<dbReference type="KEGG" id="eco:b1631"/>
<dbReference type="KEGG" id="ecoc:C3026_09370"/>
<dbReference type="PATRIC" id="fig|1411691.4.peg.630"/>
<dbReference type="EchoBASE" id="EB3696"/>
<dbReference type="eggNOG" id="COG4659">
    <property type="taxonomic scope" value="Bacteria"/>
</dbReference>
<dbReference type="HOGENOM" id="CLU_077882_1_0_6"/>
<dbReference type="InParanoid" id="P77285"/>
<dbReference type="OMA" id="YSGAIHL"/>
<dbReference type="OrthoDB" id="9784165at2"/>
<dbReference type="PhylomeDB" id="P77285"/>
<dbReference type="BioCyc" id="EcoCyc:G6875-MONOMER"/>
<dbReference type="PRO" id="PR:P77285"/>
<dbReference type="Proteomes" id="UP000000625">
    <property type="component" value="Chromosome"/>
</dbReference>
<dbReference type="GO" id="GO:0009279">
    <property type="term" value="C:cell outer membrane"/>
    <property type="evidence" value="ECO:0000314"/>
    <property type="project" value="EcoCyc"/>
</dbReference>
<dbReference type="GO" id="GO:1990204">
    <property type="term" value="C:oxidoreductase complex"/>
    <property type="evidence" value="ECO:0000314"/>
    <property type="project" value="EcoCyc"/>
</dbReference>
<dbReference type="GO" id="GO:0005886">
    <property type="term" value="C:plasma membrane"/>
    <property type="evidence" value="ECO:0007005"/>
    <property type="project" value="EcoCyc"/>
</dbReference>
<dbReference type="GO" id="GO:0098797">
    <property type="term" value="C:plasma membrane protein complex"/>
    <property type="evidence" value="ECO:0000314"/>
    <property type="project" value="EcoCyc"/>
</dbReference>
<dbReference type="GO" id="GO:0009055">
    <property type="term" value="F:electron transfer activity"/>
    <property type="evidence" value="ECO:0007669"/>
    <property type="project" value="InterPro"/>
</dbReference>
<dbReference type="GO" id="GO:0010181">
    <property type="term" value="F:FMN binding"/>
    <property type="evidence" value="ECO:0007669"/>
    <property type="project" value="InterPro"/>
</dbReference>
<dbReference type="GO" id="GO:0016651">
    <property type="term" value="F:oxidoreductase activity, acting on NAD(P)H"/>
    <property type="evidence" value="ECO:0000314"/>
    <property type="project" value="EcoCyc"/>
</dbReference>
<dbReference type="GO" id="GO:0022900">
    <property type="term" value="P:electron transport chain"/>
    <property type="evidence" value="ECO:0007669"/>
    <property type="project" value="UniProtKB-UniRule"/>
</dbReference>
<dbReference type="HAMAP" id="MF_00479">
    <property type="entry name" value="RsxG_RnfG"/>
    <property type="match status" value="1"/>
</dbReference>
<dbReference type="InterPro" id="IPR007329">
    <property type="entry name" value="FMN-bd"/>
</dbReference>
<dbReference type="InterPro" id="IPR010209">
    <property type="entry name" value="Ion_transpt_RnfG/RsxG"/>
</dbReference>
<dbReference type="NCBIfam" id="NF002519">
    <property type="entry name" value="PRK01908.1"/>
    <property type="match status" value="1"/>
</dbReference>
<dbReference type="NCBIfam" id="TIGR01947">
    <property type="entry name" value="rnfG"/>
    <property type="match status" value="1"/>
</dbReference>
<dbReference type="PANTHER" id="PTHR36118">
    <property type="entry name" value="ION-TRANSLOCATING OXIDOREDUCTASE COMPLEX SUBUNIT G"/>
    <property type="match status" value="1"/>
</dbReference>
<dbReference type="PANTHER" id="PTHR36118:SF1">
    <property type="entry name" value="ION-TRANSLOCATING OXIDOREDUCTASE COMPLEX SUBUNIT G"/>
    <property type="match status" value="1"/>
</dbReference>
<dbReference type="Pfam" id="PF04205">
    <property type="entry name" value="FMN_bind"/>
    <property type="match status" value="1"/>
</dbReference>
<dbReference type="PIRSF" id="PIRSF006091">
    <property type="entry name" value="E_trnsport_RnfG"/>
    <property type="match status" value="1"/>
</dbReference>
<dbReference type="SMART" id="SM00900">
    <property type="entry name" value="FMN_bind"/>
    <property type="match status" value="1"/>
</dbReference>
<comment type="function">
    <text evidence="1 2">Part of a membrane-bound complex that couples electron transfer with translocation of ions across the membrane (By similarity). Required to maintain the reduced state of SoxR. Probably transfers electron from NAD(P)H to SoxR (PubMed:12773378).</text>
</comment>
<comment type="cofactor">
    <cofactor evidence="1">
        <name>FMN</name>
        <dbReference type="ChEBI" id="CHEBI:58210"/>
    </cofactor>
</comment>
<comment type="subunit">
    <text evidence="1 5">The complex is composed of six subunits: RsxA, RsxB, RsxC, RsxD, RsxE and RsxG.</text>
</comment>
<comment type="subcellular location">
    <subcellularLocation>
        <location evidence="1 4">Cell inner membrane</location>
        <topology evidence="1">Single-pass membrane protein</topology>
    </subcellularLocation>
</comment>
<comment type="similarity">
    <text evidence="1">Belongs to the RnfG family.</text>
</comment>
<name>RSXG_ECOLI</name>
<feature type="chain" id="PRO_0000214633" description="Ion-translocating oxidoreductase complex subunit G">
    <location>
        <begin position="1"/>
        <end position="206"/>
    </location>
</feature>
<feature type="transmembrane region" description="Helical" evidence="1">
    <location>
        <begin position="9"/>
        <end position="29"/>
    </location>
</feature>
<feature type="modified residue" description="FMN phosphoryl threonine" evidence="1">
    <location>
        <position position="174"/>
    </location>
</feature>
<keyword id="KW-0997">Cell inner membrane</keyword>
<keyword id="KW-1003">Cell membrane</keyword>
<keyword id="KW-0249">Electron transport</keyword>
<keyword id="KW-0285">Flavoprotein</keyword>
<keyword id="KW-0288">FMN</keyword>
<keyword id="KW-0472">Membrane</keyword>
<keyword id="KW-0597">Phosphoprotein</keyword>
<keyword id="KW-1185">Reference proteome</keyword>
<keyword id="KW-1278">Translocase</keyword>
<keyword id="KW-0812">Transmembrane</keyword>
<keyword id="KW-1133">Transmembrane helix</keyword>
<keyword id="KW-0813">Transport</keyword>